<sequence>MRIILLGAPGAGKGTQAQFIMEQYGIPQISTGDMLRAAVKAGTPLGLEAKKVMDAGQLVSDDLIIGLVKERIAQEDCVKGFLLDGFPRTIPQADAMAENGIEIDHVIEIDVPDEEIVKRMSGRRVHSGSGRVYHVVFNPPKVEGKDDVTGEDLSIRPDDEESTVRKRLGIYHEQTKPLVDYYGKVAAEGRTQYNKFDGTQSVTKVSEQLASVLK</sequence>
<reference key="1">
    <citation type="submission" date="2006-08" db="EMBL/GenBank/DDBJ databases">
        <title>Complete sequence of Shewanella frigidimarina NCIMB 400.</title>
        <authorList>
            <consortium name="US DOE Joint Genome Institute"/>
            <person name="Copeland A."/>
            <person name="Lucas S."/>
            <person name="Lapidus A."/>
            <person name="Barry K."/>
            <person name="Detter J.C."/>
            <person name="Glavina del Rio T."/>
            <person name="Hammon N."/>
            <person name="Israni S."/>
            <person name="Dalin E."/>
            <person name="Tice H."/>
            <person name="Pitluck S."/>
            <person name="Fredrickson J.K."/>
            <person name="Kolker E."/>
            <person name="McCuel L.A."/>
            <person name="DiChristina T."/>
            <person name="Nealson K.H."/>
            <person name="Newman D."/>
            <person name="Tiedje J.M."/>
            <person name="Zhou J."/>
            <person name="Romine M.F."/>
            <person name="Culley D.E."/>
            <person name="Serres M."/>
            <person name="Chertkov O."/>
            <person name="Brettin T."/>
            <person name="Bruce D."/>
            <person name="Han C."/>
            <person name="Tapia R."/>
            <person name="Gilna P."/>
            <person name="Schmutz J."/>
            <person name="Larimer F."/>
            <person name="Land M."/>
            <person name="Hauser L."/>
            <person name="Kyrpides N."/>
            <person name="Mikhailova N."/>
            <person name="Richardson P."/>
        </authorList>
    </citation>
    <scope>NUCLEOTIDE SEQUENCE [LARGE SCALE GENOMIC DNA]</scope>
    <source>
        <strain>NCIMB 400</strain>
    </source>
</reference>
<accession>Q084C4</accession>
<protein>
    <recommendedName>
        <fullName evidence="1">Adenylate kinase</fullName>
        <shortName evidence="1">AK</shortName>
        <ecNumber evidence="1">2.7.4.3</ecNumber>
    </recommendedName>
    <alternativeName>
        <fullName evidence="1">ATP-AMP transphosphorylase</fullName>
    </alternativeName>
    <alternativeName>
        <fullName evidence="1">ATP:AMP phosphotransferase</fullName>
    </alternativeName>
    <alternativeName>
        <fullName evidence="1">Adenylate monophosphate kinase</fullName>
    </alternativeName>
</protein>
<organism>
    <name type="scientific">Shewanella frigidimarina (strain NCIMB 400)</name>
    <dbReference type="NCBI Taxonomy" id="318167"/>
    <lineage>
        <taxon>Bacteria</taxon>
        <taxon>Pseudomonadati</taxon>
        <taxon>Pseudomonadota</taxon>
        <taxon>Gammaproteobacteria</taxon>
        <taxon>Alteromonadales</taxon>
        <taxon>Shewanellaceae</taxon>
        <taxon>Shewanella</taxon>
    </lineage>
</organism>
<feature type="chain" id="PRO_1000058897" description="Adenylate kinase">
    <location>
        <begin position="1"/>
        <end position="214"/>
    </location>
</feature>
<feature type="region of interest" description="NMP" evidence="1">
    <location>
        <begin position="30"/>
        <end position="59"/>
    </location>
</feature>
<feature type="region of interest" description="LID" evidence="1">
    <location>
        <begin position="122"/>
        <end position="159"/>
    </location>
</feature>
<feature type="binding site" evidence="1">
    <location>
        <begin position="10"/>
        <end position="15"/>
    </location>
    <ligand>
        <name>ATP</name>
        <dbReference type="ChEBI" id="CHEBI:30616"/>
    </ligand>
</feature>
<feature type="binding site" evidence="1">
    <location>
        <position position="31"/>
    </location>
    <ligand>
        <name>AMP</name>
        <dbReference type="ChEBI" id="CHEBI:456215"/>
    </ligand>
</feature>
<feature type="binding site" evidence="1">
    <location>
        <position position="36"/>
    </location>
    <ligand>
        <name>AMP</name>
        <dbReference type="ChEBI" id="CHEBI:456215"/>
    </ligand>
</feature>
<feature type="binding site" evidence="1">
    <location>
        <begin position="57"/>
        <end position="59"/>
    </location>
    <ligand>
        <name>AMP</name>
        <dbReference type="ChEBI" id="CHEBI:456215"/>
    </ligand>
</feature>
<feature type="binding site" evidence="1">
    <location>
        <begin position="85"/>
        <end position="88"/>
    </location>
    <ligand>
        <name>AMP</name>
        <dbReference type="ChEBI" id="CHEBI:456215"/>
    </ligand>
</feature>
<feature type="binding site" evidence="1">
    <location>
        <position position="92"/>
    </location>
    <ligand>
        <name>AMP</name>
        <dbReference type="ChEBI" id="CHEBI:456215"/>
    </ligand>
</feature>
<feature type="binding site" evidence="1">
    <location>
        <position position="123"/>
    </location>
    <ligand>
        <name>ATP</name>
        <dbReference type="ChEBI" id="CHEBI:30616"/>
    </ligand>
</feature>
<feature type="binding site" evidence="1">
    <location>
        <begin position="132"/>
        <end position="133"/>
    </location>
    <ligand>
        <name>ATP</name>
        <dbReference type="ChEBI" id="CHEBI:30616"/>
    </ligand>
</feature>
<feature type="binding site" evidence="1">
    <location>
        <position position="156"/>
    </location>
    <ligand>
        <name>AMP</name>
        <dbReference type="ChEBI" id="CHEBI:456215"/>
    </ligand>
</feature>
<feature type="binding site" evidence="1">
    <location>
        <position position="167"/>
    </location>
    <ligand>
        <name>AMP</name>
        <dbReference type="ChEBI" id="CHEBI:456215"/>
    </ligand>
</feature>
<feature type="binding site" evidence="1">
    <location>
        <position position="200"/>
    </location>
    <ligand>
        <name>ATP</name>
        <dbReference type="ChEBI" id="CHEBI:30616"/>
    </ligand>
</feature>
<dbReference type="EC" id="2.7.4.3" evidence="1"/>
<dbReference type="EMBL" id="CP000447">
    <property type="protein sequence ID" value="ABI71391.1"/>
    <property type="molecule type" value="Genomic_DNA"/>
</dbReference>
<dbReference type="RefSeq" id="WP_011637011.1">
    <property type="nucleotide sequence ID" value="NC_008345.1"/>
</dbReference>
<dbReference type="SMR" id="Q084C4"/>
<dbReference type="STRING" id="318167.Sfri_1540"/>
<dbReference type="KEGG" id="sfr:Sfri_1540"/>
<dbReference type="eggNOG" id="COG0563">
    <property type="taxonomic scope" value="Bacteria"/>
</dbReference>
<dbReference type="HOGENOM" id="CLU_032354_1_2_6"/>
<dbReference type="OrthoDB" id="9805030at2"/>
<dbReference type="UniPathway" id="UPA00588">
    <property type="reaction ID" value="UER00649"/>
</dbReference>
<dbReference type="Proteomes" id="UP000000684">
    <property type="component" value="Chromosome"/>
</dbReference>
<dbReference type="GO" id="GO:0005737">
    <property type="term" value="C:cytoplasm"/>
    <property type="evidence" value="ECO:0007669"/>
    <property type="project" value="UniProtKB-SubCell"/>
</dbReference>
<dbReference type="GO" id="GO:0004017">
    <property type="term" value="F:adenylate kinase activity"/>
    <property type="evidence" value="ECO:0007669"/>
    <property type="project" value="UniProtKB-UniRule"/>
</dbReference>
<dbReference type="GO" id="GO:0005524">
    <property type="term" value="F:ATP binding"/>
    <property type="evidence" value="ECO:0007669"/>
    <property type="project" value="UniProtKB-UniRule"/>
</dbReference>
<dbReference type="GO" id="GO:0044209">
    <property type="term" value="P:AMP salvage"/>
    <property type="evidence" value="ECO:0007669"/>
    <property type="project" value="UniProtKB-UniRule"/>
</dbReference>
<dbReference type="CDD" id="cd01428">
    <property type="entry name" value="ADK"/>
    <property type="match status" value="1"/>
</dbReference>
<dbReference type="FunFam" id="3.40.50.300:FF:000106">
    <property type="entry name" value="Adenylate kinase mitochondrial"/>
    <property type="match status" value="1"/>
</dbReference>
<dbReference type="Gene3D" id="3.40.50.300">
    <property type="entry name" value="P-loop containing nucleotide triphosphate hydrolases"/>
    <property type="match status" value="1"/>
</dbReference>
<dbReference type="HAMAP" id="MF_00235">
    <property type="entry name" value="Adenylate_kinase_Adk"/>
    <property type="match status" value="1"/>
</dbReference>
<dbReference type="InterPro" id="IPR006259">
    <property type="entry name" value="Adenyl_kin_sub"/>
</dbReference>
<dbReference type="InterPro" id="IPR000850">
    <property type="entry name" value="Adenylat/UMP-CMP_kin"/>
</dbReference>
<dbReference type="InterPro" id="IPR033690">
    <property type="entry name" value="Adenylat_kinase_CS"/>
</dbReference>
<dbReference type="InterPro" id="IPR007862">
    <property type="entry name" value="Adenylate_kinase_lid-dom"/>
</dbReference>
<dbReference type="InterPro" id="IPR027417">
    <property type="entry name" value="P-loop_NTPase"/>
</dbReference>
<dbReference type="NCBIfam" id="TIGR01351">
    <property type="entry name" value="adk"/>
    <property type="match status" value="1"/>
</dbReference>
<dbReference type="NCBIfam" id="NF001379">
    <property type="entry name" value="PRK00279.1-1"/>
    <property type="match status" value="1"/>
</dbReference>
<dbReference type="NCBIfam" id="NF001380">
    <property type="entry name" value="PRK00279.1-2"/>
    <property type="match status" value="1"/>
</dbReference>
<dbReference type="NCBIfam" id="NF001381">
    <property type="entry name" value="PRK00279.1-3"/>
    <property type="match status" value="1"/>
</dbReference>
<dbReference type="NCBIfam" id="NF011100">
    <property type="entry name" value="PRK14527.1"/>
    <property type="match status" value="1"/>
</dbReference>
<dbReference type="PANTHER" id="PTHR23359">
    <property type="entry name" value="NUCLEOTIDE KINASE"/>
    <property type="match status" value="1"/>
</dbReference>
<dbReference type="Pfam" id="PF00406">
    <property type="entry name" value="ADK"/>
    <property type="match status" value="1"/>
</dbReference>
<dbReference type="Pfam" id="PF05191">
    <property type="entry name" value="ADK_lid"/>
    <property type="match status" value="1"/>
</dbReference>
<dbReference type="PRINTS" id="PR00094">
    <property type="entry name" value="ADENYLTKNASE"/>
</dbReference>
<dbReference type="SUPFAM" id="SSF52540">
    <property type="entry name" value="P-loop containing nucleoside triphosphate hydrolases"/>
    <property type="match status" value="1"/>
</dbReference>
<dbReference type="PROSITE" id="PS00113">
    <property type="entry name" value="ADENYLATE_KINASE"/>
    <property type="match status" value="1"/>
</dbReference>
<comment type="function">
    <text evidence="1">Catalyzes the reversible transfer of the terminal phosphate group between ATP and AMP. Plays an important role in cellular energy homeostasis and in adenine nucleotide metabolism.</text>
</comment>
<comment type="catalytic activity">
    <reaction evidence="1">
        <text>AMP + ATP = 2 ADP</text>
        <dbReference type="Rhea" id="RHEA:12973"/>
        <dbReference type="ChEBI" id="CHEBI:30616"/>
        <dbReference type="ChEBI" id="CHEBI:456215"/>
        <dbReference type="ChEBI" id="CHEBI:456216"/>
        <dbReference type="EC" id="2.7.4.3"/>
    </reaction>
</comment>
<comment type="pathway">
    <text evidence="1">Purine metabolism; AMP biosynthesis via salvage pathway; AMP from ADP: step 1/1.</text>
</comment>
<comment type="subunit">
    <text evidence="1">Monomer.</text>
</comment>
<comment type="subcellular location">
    <subcellularLocation>
        <location evidence="1">Cytoplasm</location>
    </subcellularLocation>
</comment>
<comment type="domain">
    <text evidence="1">Consists of three domains, a large central CORE domain and two small peripheral domains, NMPbind and LID, which undergo movements during catalysis. The LID domain closes over the site of phosphoryl transfer upon ATP binding. Assembling and dissambling the active center during each catalytic cycle provides an effective means to prevent ATP hydrolysis.</text>
</comment>
<comment type="similarity">
    <text evidence="1">Belongs to the adenylate kinase family.</text>
</comment>
<proteinExistence type="inferred from homology"/>
<evidence type="ECO:0000255" key="1">
    <source>
        <dbReference type="HAMAP-Rule" id="MF_00235"/>
    </source>
</evidence>
<name>KAD_SHEFN</name>
<keyword id="KW-0067">ATP-binding</keyword>
<keyword id="KW-0963">Cytoplasm</keyword>
<keyword id="KW-0418">Kinase</keyword>
<keyword id="KW-0545">Nucleotide biosynthesis</keyword>
<keyword id="KW-0547">Nucleotide-binding</keyword>
<keyword id="KW-1185">Reference proteome</keyword>
<keyword id="KW-0808">Transferase</keyword>
<gene>
    <name evidence="1" type="primary">adk</name>
    <name type="ordered locus">Sfri_1540</name>
</gene>